<keyword id="KW-0963">Cytoplasm</keyword>
<keyword id="KW-0456">Lyase</keyword>
<keyword id="KW-0585">Phenylalanine catabolism</keyword>
<keyword id="KW-0587">Phenylpropanoid metabolism</keyword>
<comment type="function">
    <text evidence="2">This is a key enzyme of plant metabolism catalyzing the first reaction in the biosynthesis from L-phenylalanine of a wide variety of natural products based on the phenylpropane skeleton.</text>
</comment>
<comment type="catalytic activity">
    <reaction evidence="2">
        <text>L-phenylalanine = (E)-cinnamate + NH4(+)</text>
        <dbReference type="Rhea" id="RHEA:21384"/>
        <dbReference type="ChEBI" id="CHEBI:15669"/>
        <dbReference type="ChEBI" id="CHEBI:28938"/>
        <dbReference type="ChEBI" id="CHEBI:58095"/>
        <dbReference type="EC" id="4.3.1.24"/>
    </reaction>
</comment>
<comment type="pathway">
    <text evidence="5">Phenylpropanoid metabolism; trans-cinnamate biosynthesis; trans-cinnamate from L-phenylalanine: step 1/1.</text>
</comment>
<comment type="subunit">
    <text evidence="2">Homotetramer.</text>
</comment>
<comment type="subcellular location">
    <subcellularLocation>
        <location evidence="5">Cytoplasm</location>
    </subcellularLocation>
</comment>
<comment type="PTM">
    <text evidence="3">Contains an active site 4-methylidene-imidazol-5-one (MIO), which is formed autocatalytically by cyclization and dehydration of residues Ala-Ser-Gly.</text>
</comment>
<comment type="similarity">
    <text evidence="5">Belongs to the PAL/histidase family.</text>
</comment>
<evidence type="ECO:0000250" key="1">
    <source>
        <dbReference type="UniProtKB" id="P11544"/>
    </source>
</evidence>
<evidence type="ECO:0000250" key="2">
    <source>
        <dbReference type="UniProtKB" id="P24481"/>
    </source>
</evidence>
<evidence type="ECO:0000250" key="3">
    <source>
        <dbReference type="UniProtKB" id="Q68G84"/>
    </source>
</evidence>
<evidence type="ECO:0000255" key="4">
    <source>
        <dbReference type="PROSITE-ProRule" id="PRU10122"/>
    </source>
</evidence>
<evidence type="ECO:0000305" key="5"/>
<feature type="chain" id="PRO_0000215391" description="Phenylalanine ammonia-lyase">
    <location>
        <begin position="1"/>
        <end position="713"/>
    </location>
</feature>
<feature type="active site" description="Proton donor/acceptor" evidence="3">
    <location>
        <position position="104"/>
    </location>
</feature>
<feature type="binding site" evidence="3">
    <location>
        <position position="257"/>
    </location>
    <ligand>
        <name>(E)-cinnamate</name>
        <dbReference type="ChEBI" id="CHEBI:15669"/>
    </ligand>
</feature>
<feature type="binding site" evidence="3">
    <location>
        <position position="345"/>
    </location>
    <ligand>
        <name>(E)-cinnamate</name>
        <dbReference type="ChEBI" id="CHEBI:15669"/>
    </ligand>
</feature>
<feature type="binding site" evidence="3">
    <location>
        <position position="351"/>
    </location>
    <ligand>
        <name>(E)-cinnamate</name>
        <dbReference type="ChEBI" id="CHEBI:15669"/>
    </ligand>
</feature>
<feature type="binding site" evidence="3">
    <location>
        <position position="381"/>
    </location>
    <ligand>
        <name>(E)-cinnamate</name>
        <dbReference type="ChEBI" id="CHEBI:15669"/>
    </ligand>
</feature>
<feature type="binding site" evidence="1">
    <location>
        <position position="453"/>
    </location>
    <ligand>
        <name>(E)-cinnamate</name>
        <dbReference type="ChEBI" id="CHEBI:15669"/>
    </ligand>
</feature>
<feature type="binding site" evidence="1">
    <location>
        <position position="481"/>
    </location>
    <ligand>
        <name>(E)-cinnamate</name>
        <dbReference type="ChEBI" id="CHEBI:15669"/>
    </ligand>
</feature>
<feature type="binding site" evidence="3">
    <location>
        <position position="484"/>
    </location>
    <ligand>
        <name>(E)-cinnamate</name>
        <dbReference type="ChEBI" id="CHEBI:15669"/>
    </ligand>
</feature>
<feature type="modified residue" description="2,3-didehydroalanine (Ser)" evidence="4">
    <location>
        <position position="199"/>
    </location>
</feature>
<feature type="cross-link" description="5-imidazolinone (Ala-Gly)" evidence="3">
    <location>
        <begin position="198"/>
        <end position="200"/>
    </location>
</feature>
<reference key="1">
    <citation type="submission" date="1997-11" db="EMBL/GenBank/DDBJ databases">
        <authorList>
            <person name="Thoeringer C."/>
        </authorList>
    </citation>
    <scope>NUCLEOTIDE SEQUENCE [MRNA]</scope>
</reference>
<name>PALY_DIGLA</name>
<proteinExistence type="evidence at transcript level"/>
<sequence length="713" mass="77733">MAAVVENGHHGNNGFCVKQNDPLNWVAAAEELKGSHLDEVKRMVEEFRKTVVKLGGETLTISQVAAIAARDNEVAVQLAESSRAGVKASSDWVMESMNKGTDSYGVTTGFGATSHRRTKQGGALQKELIRFLNAGIFGNGTESTHTLPHSATRAAMLVRINTLLQGYSGIRFEILETITKFLNHNITPCLPLRGTITASGDLVPLSYIAGLLTGRPNSKAVGPNGESLNAEQAFKLAGANSGLFFELQPKEGLALVNGTAVGSGLASIALYEANILSLLAEVMSAVFAEVMNGKPEFTDHLTHKLKHHPGQIEAAAIMEHILDGSSYVKAAQKMHEMDPLQKPKQDRYALRTSPQWLGPQIEVIRTATKMIEREINSVNDNPLIDVSRNKALHGGNFQGTPIGVSMDNSRLAIASIGKLMFAQFSELVNDFYNNGLPSNLSGGRNPSLDYGFKGSEIAMASYCSELQFLANPVTNHVQSAEQHNQDVNSLGLISSRKTVEALDILKLMSSTYLVALCQAIDLRHLEENLRLSVKNTISQVAKRTLTTGVNGELHPSRFCELDLLRVVDREYVFAYVDDPCSATYPLMQKLRQVLVEHALKNGENEKNASTSIFQKIEAFEAELKAVLPKEVESARVALEDGKPAIANRITECRSYPLYKFIREELGTNFLTGEKVMSPGEECDRVFTAMSKGLIVDPLLKCLEGWNGAPLPIC</sequence>
<dbReference type="EC" id="4.3.1.24" evidence="2"/>
<dbReference type="EMBL" id="AJ002221">
    <property type="protein sequence ID" value="CAA05251.1"/>
    <property type="molecule type" value="mRNA"/>
</dbReference>
<dbReference type="SMR" id="O23924"/>
<dbReference type="UniPathway" id="UPA00713">
    <property type="reaction ID" value="UER00725"/>
</dbReference>
<dbReference type="GO" id="GO:0005737">
    <property type="term" value="C:cytoplasm"/>
    <property type="evidence" value="ECO:0007669"/>
    <property type="project" value="UniProtKB-SubCell"/>
</dbReference>
<dbReference type="GO" id="GO:0045548">
    <property type="term" value="F:phenylalanine ammonia-lyase activity"/>
    <property type="evidence" value="ECO:0007669"/>
    <property type="project" value="UniProtKB-EC"/>
</dbReference>
<dbReference type="GO" id="GO:0009800">
    <property type="term" value="P:cinnamic acid biosynthetic process"/>
    <property type="evidence" value="ECO:0007669"/>
    <property type="project" value="UniProtKB-UniPathway"/>
</dbReference>
<dbReference type="GO" id="GO:0006559">
    <property type="term" value="P:L-phenylalanine catabolic process"/>
    <property type="evidence" value="ECO:0007669"/>
    <property type="project" value="UniProtKB-KW"/>
</dbReference>
<dbReference type="CDD" id="cd00332">
    <property type="entry name" value="PAL-HAL"/>
    <property type="match status" value="1"/>
</dbReference>
<dbReference type="FunFam" id="1.10.274.20:FF:000001">
    <property type="entry name" value="Phenylalanine ammonia-lyase"/>
    <property type="match status" value="1"/>
</dbReference>
<dbReference type="FunFam" id="1.10.275.10:FF:000009">
    <property type="entry name" value="Phenylalanine ammonia-lyase"/>
    <property type="match status" value="1"/>
</dbReference>
<dbReference type="FunFam" id="1.20.200.10:FF:000009">
    <property type="entry name" value="Phenylalanine ammonia-lyase"/>
    <property type="match status" value="1"/>
</dbReference>
<dbReference type="Gene3D" id="1.20.200.10">
    <property type="entry name" value="Fumarase/aspartase (Central domain)"/>
    <property type="match status" value="1"/>
</dbReference>
<dbReference type="Gene3D" id="1.10.275.10">
    <property type="entry name" value="Fumarase/aspartase (N-terminal domain)"/>
    <property type="match status" value="1"/>
</dbReference>
<dbReference type="Gene3D" id="1.10.274.20">
    <property type="entry name" value="Phenylalanine ammonia-lyase 1, domain 3"/>
    <property type="match status" value="1"/>
</dbReference>
<dbReference type="InterPro" id="IPR001106">
    <property type="entry name" value="Aromatic_Lyase"/>
</dbReference>
<dbReference type="InterPro" id="IPR024083">
    <property type="entry name" value="Fumarase/histidase_N"/>
</dbReference>
<dbReference type="InterPro" id="IPR008948">
    <property type="entry name" value="L-Aspartase-like"/>
</dbReference>
<dbReference type="InterPro" id="IPR022313">
    <property type="entry name" value="Phe/His_NH3-lyase_AS"/>
</dbReference>
<dbReference type="InterPro" id="IPR005922">
    <property type="entry name" value="Phe_NH3-lyase"/>
</dbReference>
<dbReference type="InterPro" id="IPR023144">
    <property type="entry name" value="Phe_NH3-lyase_shielding_dom_sf"/>
</dbReference>
<dbReference type="NCBIfam" id="TIGR01226">
    <property type="entry name" value="phe_am_lyase"/>
    <property type="match status" value="1"/>
</dbReference>
<dbReference type="PANTHER" id="PTHR10362">
    <property type="entry name" value="HISTIDINE AMMONIA-LYASE"/>
    <property type="match status" value="1"/>
</dbReference>
<dbReference type="Pfam" id="PF00221">
    <property type="entry name" value="Lyase_aromatic"/>
    <property type="match status" value="1"/>
</dbReference>
<dbReference type="SUPFAM" id="SSF48557">
    <property type="entry name" value="L-aspartase-like"/>
    <property type="match status" value="1"/>
</dbReference>
<dbReference type="PROSITE" id="PS00488">
    <property type="entry name" value="PAL_HISTIDASE"/>
    <property type="match status" value="1"/>
</dbReference>
<accession>O23924</accession>
<organism>
    <name type="scientific">Digitalis lanata</name>
    <name type="common">Grecian foxglove</name>
    <dbReference type="NCBI Taxonomy" id="49450"/>
    <lineage>
        <taxon>Eukaryota</taxon>
        <taxon>Viridiplantae</taxon>
        <taxon>Streptophyta</taxon>
        <taxon>Embryophyta</taxon>
        <taxon>Tracheophyta</taxon>
        <taxon>Spermatophyta</taxon>
        <taxon>Magnoliopsida</taxon>
        <taxon>eudicotyledons</taxon>
        <taxon>Gunneridae</taxon>
        <taxon>Pentapetalae</taxon>
        <taxon>asterids</taxon>
        <taxon>lamiids</taxon>
        <taxon>Lamiales</taxon>
        <taxon>Plantaginaceae</taxon>
        <taxon>Digitalideae</taxon>
        <taxon>Digitalis</taxon>
    </lineage>
</organism>
<protein>
    <recommendedName>
        <fullName>Phenylalanine ammonia-lyase</fullName>
        <ecNumber evidence="2">4.3.1.24</ecNumber>
    </recommendedName>
</protein>